<comment type="function">
    <text evidence="1">Involved in peptide bond synthesis. Stimulates efficient translation and peptide-bond synthesis on native or reconstituted 70S ribosomes in vitro. Probably functions indirectly by altering the affinity of the ribosome for aminoacyl-tRNA, thus increasing their reactivity as acceptors for peptidyl transferase.</text>
</comment>
<comment type="pathway">
    <text evidence="1">Protein biosynthesis; polypeptide chain elongation.</text>
</comment>
<comment type="subcellular location">
    <subcellularLocation>
        <location evidence="1">Cytoplasm</location>
    </subcellularLocation>
</comment>
<comment type="similarity">
    <text evidence="1">Belongs to the elongation factor P family.</text>
</comment>
<protein>
    <recommendedName>
        <fullName evidence="1">Elongation factor P</fullName>
        <shortName evidence="1">EF-P</shortName>
    </recommendedName>
</protein>
<name>EFP_TROW8</name>
<gene>
    <name evidence="1" type="primary">efp</name>
    <name type="ordered locus">TW401</name>
</gene>
<feature type="chain" id="PRO_0000094361" description="Elongation factor P">
    <location>
        <begin position="1"/>
        <end position="185"/>
    </location>
</feature>
<keyword id="KW-0963">Cytoplasm</keyword>
<keyword id="KW-0251">Elongation factor</keyword>
<keyword id="KW-0648">Protein biosynthesis</keyword>
<evidence type="ECO:0000255" key="1">
    <source>
        <dbReference type="HAMAP-Rule" id="MF_00141"/>
    </source>
</evidence>
<dbReference type="EMBL" id="BX251411">
    <property type="protein sequence ID" value="CAD67072.1"/>
    <property type="molecule type" value="Genomic_DNA"/>
</dbReference>
<dbReference type="RefSeq" id="WP_011096352.1">
    <property type="nucleotide sequence ID" value="NC_004551.1"/>
</dbReference>
<dbReference type="SMR" id="Q83NK8"/>
<dbReference type="GeneID" id="67388180"/>
<dbReference type="KEGG" id="tws:TW401"/>
<dbReference type="HOGENOM" id="CLU_074944_0_1_11"/>
<dbReference type="UniPathway" id="UPA00345"/>
<dbReference type="GO" id="GO:0005737">
    <property type="term" value="C:cytoplasm"/>
    <property type="evidence" value="ECO:0007669"/>
    <property type="project" value="UniProtKB-SubCell"/>
</dbReference>
<dbReference type="GO" id="GO:0003746">
    <property type="term" value="F:translation elongation factor activity"/>
    <property type="evidence" value="ECO:0007669"/>
    <property type="project" value="UniProtKB-UniRule"/>
</dbReference>
<dbReference type="GO" id="GO:0043043">
    <property type="term" value="P:peptide biosynthetic process"/>
    <property type="evidence" value="ECO:0007669"/>
    <property type="project" value="InterPro"/>
</dbReference>
<dbReference type="CDD" id="cd04470">
    <property type="entry name" value="S1_EF-P_repeat_1"/>
    <property type="match status" value="1"/>
</dbReference>
<dbReference type="CDD" id="cd05794">
    <property type="entry name" value="S1_EF-P_repeat_2"/>
    <property type="match status" value="1"/>
</dbReference>
<dbReference type="FunFam" id="2.30.30.30:FF:000003">
    <property type="entry name" value="Elongation factor P"/>
    <property type="match status" value="1"/>
</dbReference>
<dbReference type="FunFam" id="2.40.50.140:FF:000004">
    <property type="entry name" value="Elongation factor P"/>
    <property type="match status" value="1"/>
</dbReference>
<dbReference type="FunFam" id="2.40.50.140:FF:000009">
    <property type="entry name" value="Elongation factor P"/>
    <property type="match status" value="1"/>
</dbReference>
<dbReference type="Gene3D" id="2.30.30.30">
    <property type="match status" value="1"/>
</dbReference>
<dbReference type="Gene3D" id="2.40.50.140">
    <property type="entry name" value="Nucleic acid-binding proteins"/>
    <property type="match status" value="2"/>
</dbReference>
<dbReference type="HAMAP" id="MF_00141">
    <property type="entry name" value="EF_P"/>
    <property type="match status" value="1"/>
</dbReference>
<dbReference type="InterPro" id="IPR015365">
    <property type="entry name" value="Elong-fact-P_C"/>
</dbReference>
<dbReference type="InterPro" id="IPR012340">
    <property type="entry name" value="NA-bd_OB-fold"/>
</dbReference>
<dbReference type="InterPro" id="IPR014722">
    <property type="entry name" value="Rib_uL2_dom2"/>
</dbReference>
<dbReference type="InterPro" id="IPR020599">
    <property type="entry name" value="Transl_elong_fac_P/YeiP"/>
</dbReference>
<dbReference type="InterPro" id="IPR013185">
    <property type="entry name" value="Transl_elong_KOW-like"/>
</dbReference>
<dbReference type="InterPro" id="IPR001059">
    <property type="entry name" value="Transl_elong_P/YeiP_cen"/>
</dbReference>
<dbReference type="InterPro" id="IPR013852">
    <property type="entry name" value="Transl_elong_P/YeiP_CS"/>
</dbReference>
<dbReference type="InterPro" id="IPR011768">
    <property type="entry name" value="Transl_elongation_fac_P"/>
</dbReference>
<dbReference type="InterPro" id="IPR008991">
    <property type="entry name" value="Translation_prot_SH3-like_sf"/>
</dbReference>
<dbReference type="NCBIfam" id="TIGR00038">
    <property type="entry name" value="efp"/>
    <property type="match status" value="1"/>
</dbReference>
<dbReference type="NCBIfam" id="NF001810">
    <property type="entry name" value="PRK00529.1"/>
    <property type="match status" value="1"/>
</dbReference>
<dbReference type="PANTHER" id="PTHR30053">
    <property type="entry name" value="ELONGATION FACTOR P"/>
    <property type="match status" value="1"/>
</dbReference>
<dbReference type="PANTHER" id="PTHR30053:SF12">
    <property type="entry name" value="ELONGATION FACTOR P (EF-P) FAMILY PROTEIN"/>
    <property type="match status" value="1"/>
</dbReference>
<dbReference type="Pfam" id="PF01132">
    <property type="entry name" value="EFP"/>
    <property type="match status" value="1"/>
</dbReference>
<dbReference type="Pfam" id="PF08207">
    <property type="entry name" value="EFP_N"/>
    <property type="match status" value="1"/>
</dbReference>
<dbReference type="Pfam" id="PF09285">
    <property type="entry name" value="Elong-fact-P_C"/>
    <property type="match status" value="1"/>
</dbReference>
<dbReference type="PIRSF" id="PIRSF005901">
    <property type="entry name" value="EF-P"/>
    <property type="match status" value="1"/>
</dbReference>
<dbReference type="SMART" id="SM01185">
    <property type="entry name" value="EFP"/>
    <property type="match status" value="1"/>
</dbReference>
<dbReference type="SMART" id="SM00841">
    <property type="entry name" value="Elong-fact-P_C"/>
    <property type="match status" value="1"/>
</dbReference>
<dbReference type="SUPFAM" id="SSF50249">
    <property type="entry name" value="Nucleic acid-binding proteins"/>
    <property type="match status" value="2"/>
</dbReference>
<dbReference type="SUPFAM" id="SSF50104">
    <property type="entry name" value="Translation proteins SH3-like domain"/>
    <property type="match status" value="1"/>
</dbReference>
<dbReference type="PROSITE" id="PS01275">
    <property type="entry name" value="EFP"/>
    <property type="match status" value="1"/>
</dbReference>
<reference key="1">
    <citation type="journal article" date="2003" name="Lancet">
        <title>Sequencing and analysis of the genome of the Whipple's disease bacterium Tropheryma whipplei.</title>
        <authorList>
            <person name="Bentley S.D."/>
            <person name="Maiwald M."/>
            <person name="Murphy L.D."/>
            <person name="Pallen M.J."/>
            <person name="Yeats C.A."/>
            <person name="Dover L.G."/>
            <person name="Norbertczak H.T."/>
            <person name="Besra G.S."/>
            <person name="Quail M.A."/>
            <person name="Harris D.E."/>
            <person name="von Herbay A."/>
            <person name="Goble A."/>
            <person name="Rutter S."/>
            <person name="Squares R."/>
            <person name="Squares S."/>
            <person name="Barrell B.G."/>
            <person name="Parkhill J."/>
            <person name="Relman D.A."/>
        </authorList>
    </citation>
    <scope>NUCLEOTIDE SEQUENCE [LARGE SCALE GENOMIC DNA]</scope>
    <source>
        <strain>TW08/27</strain>
    </source>
</reference>
<proteinExistence type="inferred from homology"/>
<accession>Q83NK8</accession>
<sequence length="185" mass="20016">MASTSDIRNGVVLNINGQLNTVIEFQHVKPGKGGAFVRTKLKNILTGKVVDKTFNAGASVVLENVDRRDCTYLYRDADSFVFMDLADYDQIRLTASQVASAANYLSDNQKVVIATHNNAPLYVDLPPSVVLAVTHTEPGVQADRSTGGTKPATLETGYQIQVPLFITVGTRIRVDTRTGAYIGKA</sequence>
<organism>
    <name type="scientific">Tropheryma whipplei (strain TW08/27)</name>
    <name type="common">Whipple's bacillus</name>
    <dbReference type="NCBI Taxonomy" id="218496"/>
    <lineage>
        <taxon>Bacteria</taxon>
        <taxon>Bacillati</taxon>
        <taxon>Actinomycetota</taxon>
        <taxon>Actinomycetes</taxon>
        <taxon>Micrococcales</taxon>
        <taxon>Tropherymataceae</taxon>
        <taxon>Tropheryma</taxon>
    </lineage>
</organism>